<dbReference type="GO" id="GO:0005576">
    <property type="term" value="C:extracellular region"/>
    <property type="evidence" value="ECO:0007669"/>
    <property type="project" value="UniProtKB-SubCell"/>
</dbReference>
<dbReference type="GO" id="GO:0090729">
    <property type="term" value="F:toxin activity"/>
    <property type="evidence" value="ECO:0000314"/>
    <property type="project" value="UniProtKB"/>
</dbReference>
<dbReference type="GO" id="GO:0035738">
    <property type="term" value="P:venom-mediated perturbation of biological process"/>
    <property type="evidence" value="ECO:0000314"/>
    <property type="project" value="UniProtKB"/>
</dbReference>
<comment type="function">
    <text evidence="1 2">Insecticidal toxin that reduces the survival of aphids (A.pisum) (PubMed:30717163, PubMed:31557881). In addition, it increases the sensitivity of the aphids to two commonly used chemical insecticides (imidacloprid and methomyl) (PubMed:30717163). Does not display any antibacterial or antifungal activity (PubMed:31557881).</text>
</comment>
<comment type="subcellular location">
    <subcellularLocation>
        <location evidence="1">Secreted</location>
    </subcellularLocation>
</comment>
<comment type="tissue specificity">
    <text evidence="5">Expressed by the venom gland.</text>
</comment>
<comment type="mass spectrometry">
    <text>Monoisotopic mass.</text>
</comment>
<comment type="miscellaneous">
    <text evidence="1">Negative results: does not show antimicrobial activity (PubMed:30717163).</text>
</comment>
<organism>
    <name type="scientific">Myrmica rubra</name>
    <name type="common">European fire ant</name>
    <dbReference type="NCBI Taxonomy" id="106198"/>
    <lineage>
        <taxon>Eukaryota</taxon>
        <taxon>Metazoa</taxon>
        <taxon>Ecdysozoa</taxon>
        <taxon>Arthropoda</taxon>
        <taxon>Hexapoda</taxon>
        <taxon>Insecta</taxon>
        <taxon>Pterygota</taxon>
        <taxon>Neoptera</taxon>
        <taxon>Endopterygota</taxon>
        <taxon>Hymenoptera</taxon>
        <taxon>Apocrita</taxon>
        <taxon>Aculeata</taxon>
        <taxon>Formicoidea</taxon>
        <taxon>Formicidae</taxon>
        <taxon>Myrmicinae</taxon>
        <taxon>Myrmica</taxon>
    </lineage>
</organism>
<proteinExistence type="evidence at protein level"/>
<sequence>IDPKLLESLA</sequence>
<accession>P0DSL0</accession>
<protein>
    <recommendedName>
        <fullName evidence="4">U1-myrmicitoxin-Mr1a</fullName>
        <shortName evidence="4">U1-MYRTX-Mr1a</shortName>
    </recommendedName>
    <alternativeName>
        <fullName evidence="3">U-myrmicitoxin-MRArub1</fullName>
        <shortName evidence="3">U-MYRTX-MRArub1</shortName>
    </alternativeName>
</protein>
<feature type="peptide" id="PRO_0000447104" description="U1-myrmicitoxin-Mr1a" evidence="1">
    <location>
        <begin position="1"/>
        <end position="10"/>
    </location>
</feature>
<feature type="modified residue" description="Alanine amide" evidence="1">
    <location>
        <position position="10"/>
    </location>
</feature>
<name>TX1A_MYRRB</name>
<evidence type="ECO:0000269" key="1">
    <source>
    </source>
</evidence>
<evidence type="ECO:0000269" key="2">
    <source>
    </source>
</evidence>
<evidence type="ECO:0000303" key="3">
    <source>
    </source>
</evidence>
<evidence type="ECO:0000305" key="4"/>
<evidence type="ECO:0000305" key="5">
    <source>
    </source>
</evidence>
<reference key="1">
    <citation type="journal article" date="2019" name="Insects">
        <title>Proteomic analysis of the venom from the ruby ant Myrmica rubra and the isolation of a novel insecticidal decapeptide.</title>
        <authorList>
            <person name="Heep J."/>
            <person name="Klaus A."/>
            <person name="Kessel T."/>
            <person name="Seip M."/>
            <person name="Vilcinskas A."/>
            <person name="Skaljac M."/>
        </authorList>
    </citation>
    <scope>PROTEIN SEQUENCE</scope>
    <scope>FUNCTION</scope>
    <scope>MASS SPECTROMETRY</scope>
    <scope>AMIDATION AT ALA-10</scope>
    <scope>SUBCELLULAR LOCATION</scope>
    <source>
        <tissue>Venom</tissue>
    </source>
</reference>
<reference key="2">
    <citation type="journal article" date="2019" name="Toxins">
        <title>Identification and Functional Characterization of a Novel Insecticidal Decapeptide from the Myrmicine Ant Manica rubida.</title>
        <authorList>
            <person name="Heep J."/>
            <person name="Skaljac M."/>
            <person name="Grotmann J."/>
            <person name="Kessel T."/>
            <person name="Seip M."/>
            <person name="Schmidtberg H."/>
            <person name="Vilcinskas A."/>
        </authorList>
    </citation>
    <scope>FUNCTION</scope>
</reference>
<keyword id="KW-0027">Amidation</keyword>
<keyword id="KW-0929">Antimicrobial</keyword>
<keyword id="KW-0903">Direct protein sequencing</keyword>
<keyword id="KW-0964">Secreted</keyword>
<keyword id="KW-0800">Toxin</keyword>